<protein>
    <recommendedName>
        <fullName evidence="1">Small ribosomal subunit protein uS4</fullName>
    </recommendedName>
    <alternativeName>
        <fullName evidence="2">30S ribosomal protein S4</fullName>
    </alternativeName>
</protein>
<sequence>MTKIVRSKYKASRRLGVSLWGDSKDAFNTRNYRPGQHGQNTMIKTSDYGLHLKAKQRLKCHYGRVTEKQFRNIFALAQKMKGNTGENFIGLLESRLDTVVYRMNIAPTIFAARQLVSHGHIKLNGKKADIASIRLKAGDVIEVKESVKQIPLIQESVSKQGQTTPGYLSFDVPSLTGKYLRVPALSDVPYPFEAEVHLVIELYSR</sequence>
<proteinExistence type="inferred from homology"/>
<reference key="1">
    <citation type="journal article" date="2009" name="PLoS ONE">
        <title>Genome sequence of the endosymbiont Rickettsia peacockii and comparison with virulent Rickettsia rickettsii: identification of virulence factors.</title>
        <authorList>
            <person name="Felsheim R.F."/>
            <person name="Kurtti T.J."/>
            <person name="Munderloh U.G."/>
        </authorList>
    </citation>
    <scope>NUCLEOTIDE SEQUENCE [LARGE SCALE GENOMIC DNA]</scope>
    <source>
        <strain>Rustic</strain>
    </source>
</reference>
<feature type="chain" id="PRO_1000214301" description="Small ribosomal subunit protein uS4">
    <location>
        <begin position="1"/>
        <end position="205"/>
    </location>
</feature>
<feature type="domain" description="S4 RNA-binding" evidence="1">
    <location>
        <begin position="94"/>
        <end position="157"/>
    </location>
</feature>
<dbReference type="EMBL" id="CP001227">
    <property type="protein sequence ID" value="ACR47855.1"/>
    <property type="molecule type" value="Genomic_DNA"/>
</dbReference>
<dbReference type="RefSeq" id="WP_010977111.1">
    <property type="nucleotide sequence ID" value="NC_012730.1"/>
</dbReference>
<dbReference type="SMR" id="C4K2Q9"/>
<dbReference type="GeneID" id="928700"/>
<dbReference type="KEGG" id="rpk:RPR_06945"/>
<dbReference type="HOGENOM" id="CLU_092403_0_0_5"/>
<dbReference type="Proteomes" id="UP000005015">
    <property type="component" value="Chromosome"/>
</dbReference>
<dbReference type="GO" id="GO:0015935">
    <property type="term" value="C:small ribosomal subunit"/>
    <property type="evidence" value="ECO:0007669"/>
    <property type="project" value="InterPro"/>
</dbReference>
<dbReference type="GO" id="GO:0019843">
    <property type="term" value="F:rRNA binding"/>
    <property type="evidence" value="ECO:0007669"/>
    <property type="project" value="UniProtKB-UniRule"/>
</dbReference>
<dbReference type="GO" id="GO:0003735">
    <property type="term" value="F:structural constituent of ribosome"/>
    <property type="evidence" value="ECO:0007669"/>
    <property type="project" value="InterPro"/>
</dbReference>
<dbReference type="GO" id="GO:0042274">
    <property type="term" value="P:ribosomal small subunit biogenesis"/>
    <property type="evidence" value="ECO:0007669"/>
    <property type="project" value="TreeGrafter"/>
</dbReference>
<dbReference type="GO" id="GO:0006412">
    <property type="term" value="P:translation"/>
    <property type="evidence" value="ECO:0007669"/>
    <property type="project" value="UniProtKB-UniRule"/>
</dbReference>
<dbReference type="CDD" id="cd00165">
    <property type="entry name" value="S4"/>
    <property type="match status" value="1"/>
</dbReference>
<dbReference type="FunFam" id="3.10.290.10:FF:000001">
    <property type="entry name" value="30S ribosomal protein S4"/>
    <property type="match status" value="1"/>
</dbReference>
<dbReference type="Gene3D" id="1.10.1050.10">
    <property type="entry name" value="Ribosomal Protein S4 Delta 41, Chain A, domain 1"/>
    <property type="match status" value="1"/>
</dbReference>
<dbReference type="Gene3D" id="3.10.290.10">
    <property type="entry name" value="RNA-binding S4 domain"/>
    <property type="match status" value="1"/>
</dbReference>
<dbReference type="HAMAP" id="MF_01306_B">
    <property type="entry name" value="Ribosomal_uS4_B"/>
    <property type="match status" value="1"/>
</dbReference>
<dbReference type="InterPro" id="IPR022801">
    <property type="entry name" value="Ribosomal_uS4"/>
</dbReference>
<dbReference type="InterPro" id="IPR005709">
    <property type="entry name" value="Ribosomal_uS4_bac-type"/>
</dbReference>
<dbReference type="InterPro" id="IPR018079">
    <property type="entry name" value="Ribosomal_uS4_CS"/>
</dbReference>
<dbReference type="InterPro" id="IPR001912">
    <property type="entry name" value="Ribosomal_uS4_N"/>
</dbReference>
<dbReference type="InterPro" id="IPR002942">
    <property type="entry name" value="S4_RNA-bd"/>
</dbReference>
<dbReference type="InterPro" id="IPR036986">
    <property type="entry name" value="S4_RNA-bd_sf"/>
</dbReference>
<dbReference type="NCBIfam" id="NF003717">
    <property type="entry name" value="PRK05327.1"/>
    <property type="match status" value="1"/>
</dbReference>
<dbReference type="NCBIfam" id="TIGR01017">
    <property type="entry name" value="rpsD_bact"/>
    <property type="match status" value="1"/>
</dbReference>
<dbReference type="PANTHER" id="PTHR11831">
    <property type="entry name" value="30S 40S RIBOSOMAL PROTEIN"/>
    <property type="match status" value="1"/>
</dbReference>
<dbReference type="PANTHER" id="PTHR11831:SF4">
    <property type="entry name" value="SMALL RIBOSOMAL SUBUNIT PROTEIN US4M"/>
    <property type="match status" value="1"/>
</dbReference>
<dbReference type="Pfam" id="PF00163">
    <property type="entry name" value="Ribosomal_S4"/>
    <property type="match status" value="1"/>
</dbReference>
<dbReference type="Pfam" id="PF01479">
    <property type="entry name" value="S4"/>
    <property type="match status" value="1"/>
</dbReference>
<dbReference type="SMART" id="SM01390">
    <property type="entry name" value="Ribosomal_S4"/>
    <property type="match status" value="1"/>
</dbReference>
<dbReference type="SMART" id="SM00363">
    <property type="entry name" value="S4"/>
    <property type="match status" value="1"/>
</dbReference>
<dbReference type="SUPFAM" id="SSF55174">
    <property type="entry name" value="Alpha-L RNA-binding motif"/>
    <property type="match status" value="1"/>
</dbReference>
<dbReference type="PROSITE" id="PS00632">
    <property type="entry name" value="RIBOSOMAL_S4"/>
    <property type="match status" value="1"/>
</dbReference>
<dbReference type="PROSITE" id="PS50889">
    <property type="entry name" value="S4"/>
    <property type="match status" value="1"/>
</dbReference>
<accession>C4K2Q9</accession>
<comment type="function">
    <text evidence="1">One of the primary rRNA binding proteins, it binds directly to 16S rRNA where it nucleates assembly of the body of the 30S subunit.</text>
</comment>
<comment type="function">
    <text evidence="1">With S5 and S12 plays an important role in translational accuracy.</text>
</comment>
<comment type="subunit">
    <text evidence="1">Part of the 30S ribosomal subunit. Contacts protein S5. The interaction surface between S4 and S5 is involved in control of translational fidelity.</text>
</comment>
<comment type="similarity">
    <text evidence="1">Belongs to the universal ribosomal protein uS4 family.</text>
</comment>
<keyword id="KW-0687">Ribonucleoprotein</keyword>
<keyword id="KW-0689">Ribosomal protein</keyword>
<keyword id="KW-0694">RNA-binding</keyword>
<keyword id="KW-0699">rRNA-binding</keyword>
<evidence type="ECO:0000255" key="1">
    <source>
        <dbReference type="HAMAP-Rule" id="MF_01306"/>
    </source>
</evidence>
<evidence type="ECO:0000305" key="2"/>
<organism>
    <name type="scientific">Rickettsia peacockii (strain Rustic)</name>
    <dbReference type="NCBI Taxonomy" id="562019"/>
    <lineage>
        <taxon>Bacteria</taxon>
        <taxon>Pseudomonadati</taxon>
        <taxon>Pseudomonadota</taxon>
        <taxon>Alphaproteobacteria</taxon>
        <taxon>Rickettsiales</taxon>
        <taxon>Rickettsiaceae</taxon>
        <taxon>Rickettsieae</taxon>
        <taxon>Rickettsia</taxon>
        <taxon>spotted fever group</taxon>
    </lineage>
</organism>
<name>RS4_RICPU</name>
<gene>
    <name evidence="1" type="primary">rpsD</name>
    <name type="ordered locus">RPR_06945</name>
</gene>